<reference key="1">
    <citation type="journal article" date="1991" name="J. Biol. Chem.">
        <title>Decreased catalytic subunit mRNA levels and altered catalytic subunit mRNA structure in a cAMP-resistant Chinese hamster ovary cell line.</title>
        <authorList>
            <person name="Howard P."/>
            <person name="Day K.H."/>
            <person name="Kim K.E."/>
            <person name="Richardson J."/>
            <person name="Thomas J."/>
            <person name="Abraham I."/>
            <person name="Fleischmann R.D."/>
            <person name="Gottesman M.M."/>
            <person name="Maurer R.A."/>
        </authorList>
    </citation>
    <scope>NUCLEOTIDE SEQUENCE [MRNA]</scope>
</reference>
<proteinExistence type="evidence at transcript level"/>
<dbReference type="EC" id="2.7.11.11"/>
<dbReference type="EMBL" id="M63312">
    <property type="protein sequence ID" value="AAA37011.1"/>
    <property type="molecule type" value="mRNA"/>
</dbReference>
<dbReference type="PIR" id="A40384">
    <property type="entry name" value="OKHYCB"/>
</dbReference>
<dbReference type="SMR" id="P68180"/>
<dbReference type="PaxDb" id="10029-XP_007630298.1"/>
<dbReference type="Ensembl" id="ENSCGRT00001029313.1">
    <property type="protein sequence ID" value="ENSCGRP00001025067.1"/>
    <property type="gene ID" value="ENSCGRG00001022775.1"/>
</dbReference>
<dbReference type="eggNOG" id="KOG0616">
    <property type="taxonomic scope" value="Eukaryota"/>
</dbReference>
<dbReference type="GeneTree" id="ENSGT00940000161169"/>
<dbReference type="BRENDA" id="2.7.11.11">
    <property type="organism ID" value="1309"/>
</dbReference>
<dbReference type="Proteomes" id="UP000694386">
    <property type="component" value="Unplaced"/>
</dbReference>
<dbReference type="Proteomes" id="UP001108280">
    <property type="component" value="Unplaced"/>
</dbReference>
<dbReference type="GO" id="GO:0005952">
    <property type="term" value="C:cAMP-dependent protein kinase complex"/>
    <property type="evidence" value="ECO:0007669"/>
    <property type="project" value="TreeGrafter"/>
</dbReference>
<dbReference type="GO" id="GO:0005829">
    <property type="term" value="C:cytosol"/>
    <property type="evidence" value="ECO:0007669"/>
    <property type="project" value="TreeGrafter"/>
</dbReference>
<dbReference type="GO" id="GO:0005634">
    <property type="term" value="C:nucleus"/>
    <property type="evidence" value="ECO:0007669"/>
    <property type="project" value="UniProtKB-SubCell"/>
</dbReference>
<dbReference type="GO" id="GO:0005886">
    <property type="term" value="C:plasma membrane"/>
    <property type="evidence" value="ECO:0007669"/>
    <property type="project" value="UniProtKB-SubCell"/>
</dbReference>
<dbReference type="GO" id="GO:0005524">
    <property type="term" value="F:ATP binding"/>
    <property type="evidence" value="ECO:0000250"/>
    <property type="project" value="UniProtKB"/>
</dbReference>
<dbReference type="GO" id="GO:0004691">
    <property type="term" value="F:cAMP-dependent protein kinase activity"/>
    <property type="evidence" value="ECO:0000250"/>
    <property type="project" value="UniProtKB"/>
</dbReference>
<dbReference type="GO" id="GO:0000287">
    <property type="term" value="F:magnesium ion binding"/>
    <property type="evidence" value="ECO:0000250"/>
    <property type="project" value="UniProtKB"/>
</dbReference>
<dbReference type="GO" id="GO:0106310">
    <property type="term" value="F:protein serine kinase activity"/>
    <property type="evidence" value="ECO:0007669"/>
    <property type="project" value="RHEA"/>
</dbReference>
<dbReference type="GO" id="GO:1904262">
    <property type="term" value="P:negative regulation of TORC1 signaling"/>
    <property type="evidence" value="ECO:0000250"/>
    <property type="project" value="UniProtKB"/>
</dbReference>
<dbReference type="GO" id="GO:0006468">
    <property type="term" value="P:protein phosphorylation"/>
    <property type="evidence" value="ECO:0000250"/>
    <property type="project" value="UniProtKB"/>
</dbReference>
<dbReference type="CDD" id="cd14209">
    <property type="entry name" value="STKc_PKA"/>
    <property type="match status" value="1"/>
</dbReference>
<dbReference type="FunFam" id="3.30.200.20:FF:000005">
    <property type="entry name" value="cAMP-dependent protein kinase catalytic subunit"/>
    <property type="match status" value="1"/>
</dbReference>
<dbReference type="FunFam" id="1.10.510.10:FF:000005">
    <property type="entry name" value="cAMP-dependent protein kinase catalytic subunit alpha"/>
    <property type="match status" value="1"/>
</dbReference>
<dbReference type="Gene3D" id="3.30.200.20">
    <property type="entry name" value="Phosphorylase Kinase, domain 1"/>
    <property type="match status" value="1"/>
</dbReference>
<dbReference type="Gene3D" id="1.10.510.10">
    <property type="entry name" value="Transferase(Phosphotransferase) domain 1"/>
    <property type="match status" value="1"/>
</dbReference>
<dbReference type="InterPro" id="IPR000961">
    <property type="entry name" value="AGC-kinase_C"/>
</dbReference>
<dbReference type="InterPro" id="IPR011009">
    <property type="entry name" value="Kinase-like_dom_sf"/>
</dbReference>
<dbReference type="InterPro" id="IPR000719">
    <property type="entry name" value="Prot_kinase_dom"/>
</dbReference>
<dbReference type="InterPro" id="IPR017441">
    <property type="entry name" value="Protein_kinase_ATP_BS"/>
</dbReference>
<dbReference type="InterPro" id="IPR008271">
    <property type="entry name" value="Ser/Thr_kinase_AS"/>
</dbReference>
<dbReference type="InterPro" id="IPR044109">
    <property type="entry name" value="STKc_PKA"/>
</dbReference>
<dbReference type="PANTHER" id="PTHR24353:SF150">
    <property type="entry name" value="CAMP-DEPENDENT PROTEIN KINASE CATALYTIC SUBUNIT BETA"/>
    <property type="match status" value="1"/>
</dbReference>
<dbReference type="PANTHER" id="PTHR24353">
    <property type="entry name" value="CYCLIC NUCLEOTIDE-DEPENDENT PROTEIN KINASE"/>
    <property type="match status" value="1"/>
</dbReference>
<dbReference type="Pfam" id="PF00069">
    <property type="entry name" value="Pkinase"/>
    <property type="match status" value="1"/>
</dbReference>
<dbReference type="SMART" id="SM00133">
    <property type="entry name" value="S_TK_X"/>
    <property type="match status" value="1"/>
</dbReference>
<dbReference type="SMART" id="SM00220">
    <property type="entry name" value="S_TKc"/>
    <property type="match status" value="1"/>
</dbReference>
<dbReference type="SUPFAM" id="SSF56112">
    <property type="entry name" value="Protein kinase-like (PK-like)"/>
    <property type="match status" value="1"/>
</dbReference>
<dbReference type="PROSITE" id="PS51285">
    <property type="entry name" value="AGC_KINASE_CTER"/>
    <property type="match status" value="1"/>
</dbReference>
<dbReference type="PROSITE" id="PS00107">
    <property type="entry name" value="PROTEIN_KINASE_ATP"/>
    <property type="match status" value="1"/>
</dbReference>
<dbReference type="PROSITE" id="PS50011">
    <property type="entry name" value="PROTEIN_KINASE_DOM"/>
    <property type="match status" value="1"/>
</dbReference>
<dbReference type="PROSITE" id="PS00108">
    <property type="entry name" value="PROTEIN_KINASE_ST"/>
    <property type="match status" value="1"/>
</dbReference>
<name>KAPCB_CRIGR</name>
<organism>
    <name type="scientific">Cricetulus griseus</name>
    <name type="common">Chinese hamster</name>
    <name type="synonym">Cricetulus barabensis griseus</name>
    <dbReference type="NCBI Taxonomy" id="10029"/>
    <lineage>
        <taxon>Eukaryota</taxon>
        <taxon>Metazoa</taxon>
        <taxon>Chordata</taxon>
        <taxon>Craniata</taxon>
        <taxon>Vertebrata</taxon>
        <taxon>Euteleostomi</taxon>
        <taxon>Mammalia</taxon>
        <taxon>Eutheria</taxon>
        <taxon>Euarchontoglires</taxon>
        <taxon>Glires</taxon>
        <taxon>Rodentia</taxon>
        <taxon>Myomorpha</taxon>
        <taxon>Muroidea</taxon>
        <taxon>Cricetidae</taxon>
        <taxon>Cricetinae</taxon>
        <taxon>Cricetulus</taxon>
    </lineage>
</organism>
<evidence type="ECO:0000250" key="1"/>
<evidence type="ECO:0000250" key="2">
    <source>
        <dbReference type="UniProtKB" id="P05131"/>
    </source>
</evidence>
<evidence type="ECO:0000250" key="3">
    <source>
        <dbReference type="UniProtKB" id="P05132"/>
    </source>
</evidence>
<evidence type="ECO:0000250" key="4">
    <source>
        <dbReference type="UniProtKB" id="P05383"/>
    </source>
</evidence>
<evidence type="ECO:0000250" key="5">
    <source>
        <dbReference type="UniProtKB" id="P22694"/>
    </source>
</evidence>
<evidence type="ECO:0000250" key="6">
    <source>
        <dbReference type="UniProtKB" id="P68181"/>
    </source>
</evidence>
<evidence type="ECO:0000250" key="7">
    <source>
        <dbReference type="UniProtKB" id="P68182"/>
    </source>
</evidence>
<evidence type="ECO:0000255" key="8">
    <source>
        <dbReference type="PROSITE-ProRule" id="PRU00159"/>
    </source>
</evidence>
<evidence type="ECO:0000255" key="9">
    <source>
        <dbReference type="PROSITE-ProRule" id="PRU00618"/>
    </source>
</evidence>
<evidence type="ECO:0000255" key="10">
    <source>
        <dbReference type="PROSITE-ProRule" id="PRU10027"/>
    </source>
</evidence>
<evidence type="ECO:0000305" key="11"/>
<gene>
    <name type="primary">PRKACB</name>
    <name type="synonym">PKACB</name>
</gene>
<feature type="initiator methionine" description="Removed" evidence="2">
    <location>
        <position position="1"/>
    </location>
</feature>
<feature type="chain" id="PRO_0000086059" description="cAMP-dependent protein kinase catalytic subunit beta">
    <location>
        <begin position="2"/>
        <end position="351"/>
    </location>
</feature>
<feature type="domain" description="Protein kinase" evidence="8">
    <location>
        <begin position="44"/>
        <end position="298"/>
    </location>
</feature>
<feature type="domain" description="AGC-kinase C-terminal" evidence="9">
    <location>
        <begin position="299"/>
        <end position="351"/>
    </location>
</feature>
<feature type="active site" description="Proton acceptor" evidence="8 10">
    <location>
        <position position="167"/>
    </location>
</feature>
<feature type="binding site" evidence="8">
    <location>
        <begin position="50"/>
        <end position="58"/>
    </location>
    <ligand>
        <name>ATP</name>
        <dbReference type="ChEBI" id="CHEBI:30616"/>
    </ligand>
</feature>
<feature type="binding site" evidence="8">
    <location>
        <position position="73"/>
    </location>
    <ligand>
        <name>ATP</name>
        <dbReference type="ChEBI" id="CHEBI:30616"/>
    </ligand>
</feature>
<feature type="modified residue" description="Deamidated asparagine" evidence="4">
    <location>
        <position position="3"/>
    </location>
</feature>
<feature type="modified residue" description="Phosphoserine" evidence="3">
    <location>
        <position position="11"/>
    </location>
</feature>
<feature type="modified residue" description="Phosphotyrosine" evidence="6">
    <location>
        <position position="69"/>
    </location>
</feature>
<feature type="modified residue" description="Phosphoserine" evidence="3">
    <location>
        <position position="140"/>
    </location>
</feature>
<feature type="modified residue" description="Phosphothreonine" evidence="3">
    <location>
        <position position="198"/>
    </location>
</feature>
<feature type="modified residue" description="Phosphoserine" evidence="7">
    <location>
        <position position="322"/>
    </location>
</feature>
<feature type="modified residue" description="Phosphotyrosine" evidence="3">
    <location>
        <position position="331"/>
    </location>
</feature>
<feature type="modified residue" description="Phosphoserine" evidence="7">
    <location>
        <position position="339"/>
    </location>
</feature>
<feature type="lipid moiety-binding region" description="N-myristoyl glycine" evidence="5">
    <location>
        <position position="2"/>
    </location>
</feature>
<comment type="function">
    <text evidence="5">Mediates cAMP-dependent signaling triggered by receptor binding to GPCRs. PKA activation regulates diverse cellular processes such as cell proliferation, the cell cycle, differentiation and regulation of microtubule dynamics, chromatin condensation and decondensation, nuclear envelope disassembly and reassembly, as well as regulation of intracellular transport mechanisms and ion flux. Regulates the abundance of compartmentalized pools of its regulatory subunits through phosphorylation of PJA2 which binds and ubiquitinates these subunits, leading to their subsequent proteolysis. Phosphorylates GPKOW which regulates its ability to bind RNA. Acts as a negative regulator of mTORC1 by mediating phosphorylation of RPTOR.</text>
</comment>
<comment type="catalytic activity">
    <reaction>
        <text>L-seryl-[protein] + ATP = O-phospho-L-seryl-[protein] + ADP + H(+)</text>
        <dbReference type="Rhea" id="RHEA:17989"/>
        <dbReference type="Rhea" id="RHEA-COMP:9863"/>
        <dbReference type="Rhea" id="RHEA-COMP:11604"/>
        <dbReference type="ChEBI" id="CHEBI:15378"/>
        <dbReference type="ChEBI" id="CHEBI:29999"/>
        <dbReference type="ChEBI" id="CHEBI:30616"/>
        <dbReference type="ChEBI" id="CHEBI:83421"/>
        <dbReference type="ChEBI" id="CHEBI:456216"/>
        <dbReference type="EC" id="2.7.11.11"/>
    </reaction>
</comment>
<comment type="catalytic activity">
    <reaction>
        <text>L-threonyl-[protein] + ATP = O-phospho-L-threonyl-[protein] + ADP + H(+)</text>
        <dbReference type="Rhea" id="RHEA:46608"/>
        <dbReference type="Rhea" id="RHEA-COMP:11060"/>
        <dbReference type="Rhea" id="RHEA-COMP:11605"/>
        <dbReference type="ChEBI" id="CHEBI:15378"/>
        <dbReference type="ChEBI" id="CHEBI:30013"/>
        <dbReference type="ChEBI" id="CHEBI:30616"/>
        <dbReference type="ChEBI" id="CHEBI:61977"/>
        <dbReference type="ChEBI" id="CHEBI:456216"/>
        <dbReference type="EC" id="2.7.11.11"/>
    </reaction>
</comment>
<comment type="cofactor">
    <cofactor evidence="1">
        <name>Mg(2+)</name>
        <dbReference type="ChEBI" id="CHEBI:18420"/>
    </cofactor>
</comment>
<comment type="activity regulation">
    <text evidence="5">Activated by cAMP.</text>
</comment>
<comment type="subunit">
    <text evidence="3 5">A number of inactive tetrameric holoenzymes are produced by the combination of homo- or heterodimers of the different regulatory subunits associated with two catalytic subunits. cAMP causes the dissociation of the inactive holoenzyme into a dimer of regulatory subunits bound to four cAMP and two free monomeric catalytic subunits. Interacts with PRKAR1A and PRKAR2B (By similarity). The cAMP-dependent protein kinase catalytic subunit binds PJA2. Interacts with GPKOW.</text>
</comment>
<comment type="subcellular location">
    <subcellularLocation>
        <location evidence="5">Cytoplasm</location>
    </subcellularLocation>
    <subcellularLocation>
        <location evidence="5">Cell membrane</location>
    </subcellularLocation>
    <subcellularLocation>
        <location evidence="5">Membrane</location>
        <topology evidence="5">Lipid-anchor</topology>
    </subcellularLocation>
    <subcellularLocation>
        <location evidence="2">Nucleus</location>
    </subcellularLocation>
    <text evidence="2">Translocates into the nucleus (monomeric catalytic subunit). The inactive holoenzyme is found in the cytoplasm.</text>
</comment>
<comment type="PTM">
    <text evidence="4">Asn-3 is partially deaminated to Asp giving rise to 2 major isoelectric variants, called CB and CA respectively.</text>
</comment>
<comment type="similarity">
    <text evidence="11">Belongs to the protein kinase superfamily. AGC Ser/Thr protein kinase family. cAMP subfamily.</text>
</comment>
<keyword id="KW-0067">ATP-binding</keyword>
<keyword id="KW-0114">cAMP</keyword>
<keyword id="KW-1003">Cell membrane</keyword>
<keyword id="KW-0963">Cytoplasm</keyword>
<keyword id="KW-0418">Kinase</keyword>
<keyword id="KW-0449">Lipoprotein</keyword>
<keyword id="KW-0472">Membrane</keyword>
<keyword id="KW-0519">Myristate</keyword>
<keyword id="KW-0547">Nucleotide-binding</keyword>
<keyword id="KW-0539">Nucleus</keyword>
<keyword id="KW-0597">Phosphoprotein</keyword>
<keyword id="KW-0723">Serine/threonine-protein kinase</keyword>
<keyword id="KW-0808">Transferase</keyword>
<sequence length="351" mass="40708">MGNTAIAKKGSEVESVKEFLAKAKEDFLRKWENPPPSNAGLEDFERKKTLGTGSFGRVMLVKHKATEQYYAMKILDKQKVVKLKQIEHTLNEKRILQAVEFPFLVRLEYSFKDNSNLYMVMEYVPGGEMFSHLRRIGRFSEPHARFYAAQIVLTFEYLHSLDLIYRDLKPENLLIDHQGYIQVTDFGFAKRVKGRTWTLCGTPEYLAPEIILSKGYNKAVDWWALGVLIYEMAAGYPPFFADQPIQIYEKIVSGKVRFPSHFSSDLKDLLRNLLQVDLTKRFGNLKNGVSDIKTHKWFATTDWIAIYQRKVEAPFIPKFRGSGDTSNFDDYEEEEIRVSITEKCGKEFCEF</sequence>
<accession>P68180</accession>
<accession>P05206</accession>
<protein>
    <recommendedName>
        <fullName>cAMP-dependent protein kinase catalytic subunit beta</fullName>
        <shortName>PKA C-beta</shortName>
        <ecNumber>2.7.11.11</ecNumber>
    </recommendedName>
</protein>